<accession>Q83K58</accession>
<accession>Q7C0J4</accession>
<organism>
    <name type="scientific">Shigella flexneri</name>
    <dbReference type="NCBI Taxonomy" id="623"/>
    <lineage>
        <taxon>Bacteria</taxon>
        <taxon>Pseudomonadati</taxon>
        <taxon>Pseudomonadota</taxon>
        <taxon>Gammaproteobacteria</taxon>
        <taxon>Enterobacterales</taxon>
        <taxon>Enterobacteriaceae</taxon>
        <taxon>Shigella</taxon>
    </lineage>
</organism>
<reference key="1">
    <citation type="journal article" date="2002" name="Nucleic Acids Res.">
        <title>Genome sequence of Shigella flexneri 2a: insights into pathogenicity through comparison with genomes of Escherichia coli K12 and O157.</title>
        <authorList>
            <person name="Jin Q."/>
            <person name="Yuan Z."/>
            <person name="Xu J."/>
            <person name="Wang Y."/>
            <person name="Shen Y."/>
            <person name="Lu W."/>
            <person name="Wang J."/>
            <person name="Liu H."/>
            <person name="Yang J."/>
            <person name="Yang F."/>
            <person name="Zhang X."/>
            <person name="Zhang J."/>
            <person name="Yang G."/>
            <person name="Wu H."/>
            <person name="Qu D."/>
            <person name="Dong J."/>
            <person name="Sun L."/>
            <person name="Xue Y."/>
            <person name="Zhao A."/>
            <person name="Gao Y."/>
            <person name="Zhu J."/>
            <person name="Kan B."/>
            <person name="Ding K."/>
            <person name="Chen S."/>
            <person name="Cheng H."/>
            <person name="Yao Z."/>
            <person name="He B."/>
            <person name="Chen R."/>
            <person name="Ma D."/>
            <person name="Qiang B."/>
            <person name="Wen Y."/>
            <person name="Hou Y."/>
            <person name="Yu J."/>
        </authorList>
    </citation>
    <scope>NUCLEOTIDE SEQUENCE [LARGE SCALE GENOMIC DNA]</scope>
    <source>
        <strain>301 / Serotype 2a</strain>
    </source>
</reference>
<reference key="2">
    <citation type="journal article" date="2003" name="Infect. Immun.">
        <title>Complete genome sequence and comparative genomics of Shigella flexneri serotype 2a strain 2457T.</title>
        <authorList>
            <person name="Wei J."/>
            <person name="Goldberg M.B."/>
            <person name="Burland V."/>
            <person name="Venkatesan M.M."/>
            <person name="Deng W."/>
            <person name="Fournier G."/>
            <person name="Mayhew G.F."/>
            <person name="Plunkett G. III"/>
            <person name="Rose D.J."/>
            <person name="Darling A."/>
            <person name="Mau B."/>
            <person name="Perna N.T."/>
            <person name="Payne S.M."/>
            <person name="Runyen-Janecky L.J."/>
            <person name="Zhou S."/>
            <person name="Schwartz D.C."/>
            <person name="Blattner F.R."/>
        </authorList>
    </citation>
    <scope>NUCLEOTIDE SEQUENCE [LARGE SCALE GENOMIC DNA]</scope>
    <source>
        <strain>ATCC 700930 / 2457T / Serotype 2a</strain>
    </source>
</reference>
<sequence length="191" mass="21749">MTQQITLIKDKILSDNYFTLHNITYDLTRKDGEVIRHKREVYDRGNGATILLYNAKKKSVVLIRQFRVATWVNGNESGQLIETCAGLLDNDEPEVCIRKEAIEETGYEVGEVRKLFELYMSPGGVTELIHFFIAEYSDNQRANAGGGVEDEDIEVLELPFSQALEMIKTGEIRDGKTVLLLNYLQMSHLMD</sequence>
<dbReference type="EC" id="3.6.1.-" evidence="1"/>
<dbReference type="EMBL" id="AE005674">
    <property type="protein sequence ID" value="AAN44013.1"/>
    <property type="molecule type" value="Genomic_DNA"/>
</dbReference>
<dbReference type="EMBL" id="AE014073">
    <property type="protein sequence ID" value="AAP17828.1"/>
    <property type="molecule type" value="Genomic_DNA"/>
</dbReference>
<dbReference type="RefSeq" id="WP_001325569.1">
    <property type="nucleotide sequence ID" value="NZ_WPGW01000011.1"/>
</dbReference>
<dbReference type="SMR" id="Q83K58"/>
<dbReference type="STRING" id="198214.SF2509"/>
<dbReference type="PaxDb" id="198214-SF2509"/>
<dbReference type="KEGG" id="sfl:SF2509"/>
<dbReference type="KEGG" id="sfx:S2660"/>
<dbReference type="PATRIC" id="fig|198214.7.peg.2999"/>
<dbReference type="HOGENOM" id="CLU_062658_6_0_6"/>
<dbReference type="Proteomes" id="UP000001006">
    <property type="component" value="Chromosome"/>
</dbReference>
<dbReference type="Proteomes" id="UP000002673">
    <property type="component" value="Chromosome"/>
</dbReference>
<dbReference type="GO" id="GO:0005829">
    <property type="term" value="C:cytosol"/>
    <property type="evidence" value="ECO:0007669"/>
    <property type="project" value="TreeGrafter"/>
</dbReference>
<dbReference type="GO" id="GO:0016818">
    <property type="term" value="F:hydrolase activity, acting on acid anhydrides, in phosphorus-containing anhydrides"/>
    <property type="evidence" value="ECO:0007669"/>
    <property type="project" value="InterPro"/>
</dbReference>
<dbReference type="GO" id="GO:0046872">
    <property type="term" value="F:metal ion binding"/>
    <property type="evidence" value="ECO:0007669"/>
    <property type="project" value="UniProtKB-KW"/>
</dbReference>
<dbReference type="GO" id="GO:0006753">
    <property type="term" value="P:nucleoside phosphate metabolic process"/>
    <property type="evidence" value="ECO:0007669"/>
    <property type="project" value="TreeGrafter"/>
</dbReference>
<dbReference type="GO" id="GO:0019693">
    <property type="term" value="P:ribose phosphate metabolic process"/>
    <property type="evidence" value="ECO:0007669"/>
    <property type="project" value="TreeGrafter"/>
</dbReference>
<dbReference type="CDD" id="cd24157">
    <property type="entry name" value="NUDIX_GDPMK"/>
    <property type="match status" value="1"/>
</dbReference>
<dbReference type="FunFam" id="3.90.79.10:FF:000010">
    <property type="entry name" value="GDP-mannose pyrophosphatase NudK"/>
    <property type="match status" value="1"/>
</dbReference>
<dbReference type="Gene3D" id="3.90.79.10">
    <property type="entry name" value="Nucleoside Triphosphate Pyrophosphohydrolase"/>
    <property type="match status" value="1"/>
</dbReference>
<dbReference type="InterPro" id="IPR004385">
    <property type="entry name" value="NDP_pyrophosphatase"/>
</dbReference>
<dbReference type="InterPro" id="IPR015797">
    <property type="entry name" value="NUDIX_hydrolase-like_dom_sf"/>
</dbReference>
<dbReference type="InterPro" id="IPR000086">
    <property type="entry name" value="NUDIX_hydrolase_dom"/>
</dbReference>
<dbReference type="NCBIfam" id="TIGR00052">
    <property type="entry name" value="nudix-type nucleoside diphosphatase, YffH/AdpP family"/>
    <property type="match status" value="1"/>
</dbReference>
<dbReference type="NCBIfam" id="NF011585">
    <property type="entry name" value="PRK15009.1"/>
    <property type="match status" value="1"/>
</dbReference>
<dbReference type="PANTHER" id="PTHR11839:SF18">
    <property type="entry name" value="NUDIX HYDROLASE DOMAIN-CONTAINING PROTEIN"/>
    <property type="match status" value="1"/>
</dbReference>
<dbReference type="PANTHER" id="PTHR11839">
    <property type="entry name" value="UDP/ADP-SUGAR PYROPHOSPHATASE"/>
    <property type="match status" value="1"/>
</dbReference>
<dbReference type="Pfam" id="PF00293">
    <property type="entry name" value="NUDIX"/>
    <property type="match status" value="1"/>
</dbReference>
<dbReference type="SUPFAM" id="SSF55811">
    <property type="entry name" value="Nudix"/>
    <property type="match status" value="1"/>
</dbReference>
<dbReference type="PROSITE" id="PS51462">
    <property type="entry name" value="NUDIX"/>
    <property type="match status" value="1"/>
</dbReference>
<keyword id="KW-0378">Hydrolase</keyword>
<keyword id="KW-0460">Magnesium</keyword>
<keyword id="KW-0479">Metal-binding</keyword>
<keyword id="KW-1185">Reference proteome</keyword>
<evidence type="ECO:0000250" key="1">
    <source>
        <dbReference type="UniProtKB" id="P37128"/>
    </source>
</evidence>
<evidence type="ECO:0000255" key="2">
    <source>
        <dbReference type="PROSITE-ProRule" id="PRU00794"/>
    </source>
</evidence>
<evidence type="ECO:0000305" key="3"/>
<gene>
    <name type="primary">nudK</name>
    <name type="ordered locus">SF2509</name>
    <name type="ordered locus">S2660</name>
</gene>
<comment type="function">
    <text evidence="1">Nucleoside diphosphate sugar hydrolase that hydrolyzes GDP-mannose as its preferred substrate, yielding GMP and mannose-1-phosphate.</text>
</comment>
<comment type="catalytic activity">
    <reaction evidence="1">
        <text>GDP-alpha-D-mannose + H2O = alpha-D-mannose 1-phosphate + GMP + 2 H(+)</text>
        <dbReference type="Rhea" id="RHEA:27978"/>
        <dbReference type="ChEBI" id="CHEBI:15377"/>
        <dbReference type="ChEBI" id="CHEBI:15378"/>
        <dbReference type="ChEBI" id="CHEBI:57527"/>
        <dbReference type="ChEBI" id="CHEBI:58115"/>
        <dbReference type="ChEBI" id="CHEBI:58409"/>
    </reaction>
</comment>
<comment type="cofactor">
    <cofactor evidence="1">
        <name>Mg(2+)</name>
        <dbReference type="ChEBI" id="CHEBI:18420"/>
    </cofactor>
</comment>
<comment type="subunit">
    <text evidence="1">Homodimer.</text>
</comment>
<comment type="domain">
    <text evidence="1">In the dimer, the N-terminal domains are swapped between the two monomers, such that residues of both chains contribute to the active site.</text>
</comment>
<comment type="similarity">
    <text evidence="3">Belongs to the Nudix hydrolase family. NudK subfamily.</text>
</comment>
<protein>
    <recommendedName>
        <fullName>GDP-mannose pyrophosphatase</fullName>
        <ecNumber evidence="1">3.6.1.-</ecNumber>
    </recommendedName>
    <alternativeName>
        <fullName>GDP-mannose hydrolase</fullName>
    </alternativeName>
    <alternativeName>
        <fullName>GDPMK</fullName>
    </alternativeName>
</protein>
<name>NUDK_SHIFL</name>
<feature type="chain" id="PRO_0000342502" description="GDP-mannose pyrophosphatase">
    <location>
        <begin position="1"/>
        <end position="191"/>
    </location>
</feature>
<feature type="domain" description="Nudix hydrolase" evidence="2">
    <location>
        <begin position="43"/>
        <end position="180"/>
    </location>
</feature>
<feature type="short sequence motif" description="Nudix box">
    <location>
        <begin position="86"/>
        <end position="106"/>
    </location>
</feature>
<feature type="binding site" description="in other chain" evidence="1">
    <location>
        <position position="17"/>
    </location>
    <ligand>
        <name>GDP-alpha-D-mannose</name>
        <dbReference type="ChEBI" id="CHEBI:57527"/>
        <note>ligand shared between dimeric partners</note>
    </ligand>
</feature>
<feature type="binding site" evidence="1">
    <location>
        <begin position="38"/>
        <end position="40"/>
    </location>
    <ligand>
        <name>GDP-alpha-D-mannose</name>
        <dbReference type="ChEBI" id="CHEBI:57527"/>
        <note>ligand shared between dimeric partners</note>
    </ligand>
</feature>
<feature type="binding site" description="in other chain" evidence="1">
    <location>
        <position position="67"/>
    </location>
    <ligand>
        <name>GDP-alpha-D-mannose</name>
        <dbReference type="ChEBI" id="CHEBI:57527"/>
        <note>ligand shared between dimeric partners</note>
    </ligand>
</feature>
<feature type="binding site" description="in other chain" evidence="1">
    <location>
        <begin position="85"/>
        <end position="87"/>
    </location>
    <ligand>
        <name>GDP-alpha-D-mannose</name>
        <dbReference type="ChEBI" id="CHEBI:57527"/>
        <note>ligand shared between dimeric partners</note>
    </ligand>
</feature>
<feature type="binding site" evidence="1">
    <location>
        <position position="85"/>
    </location>
    <ligand>
        <name>Mg(2+)</name>
        <dbReference type="ChEBI" id="CHEBI:18420"/>
        <label>1</label>
    </ligand>
</feature>
<feature type="binding site" evidence="1">
    <location>
        <position position="100"/>
    </location>
    <ligand>
        <name>Mg(2+)</name>
        <dbReference type="ChEBI" id="CHEBI:18420"/>
        <label>2</label>
    </ligand>
</feature>
<feature type="binding site" description="in other chain" evidence="1">
    <location>
        <position position="104"/>
    </location>
    <ligand>
        <name>GDP-alpha-D-mannose</name>
        <dbReference type="ChEBI" id="CHEBI:57527"/>
        <note>ligand shared between dimeric partners</note>
    </ligand>
</feature>
<feature type="binding site" evidence="1">
    <location>
        <position position="104"/>
    </location>
    <ligand>
        <name>Mg(2+)</name>
        <dbReference type="ChEBI" id="CHEBI:18420"/>
        <label>1</label>
    </ligand>
</feature>
<feature type="binding site" evidence="1">
    <location>
        <position position="104"/>
    </location>
    <ligand>
        <name>Mg(2+)</name>
        <dbReference type="ChEBI" id="CHEBI:18420"/>
        <label>2</label>
    </ligand>
</feature>
<feature type="binding site" description="in other chain" evidence="1">
    <location>
        <position position="127"/>
    </location>
    <ligand>
        <name>GDP-alpha-D-mannose</name>
        <dbReference type="ChEBI" id="CHEBI:57527"/>
        <note>ligand shared between dimeric partners</note>
    </ligand>
</feature>
<feature type="binding site" description="in other chain" evidence="1">
    <location>
        <begin position="150"/>
        <end position="151"/>
    </location>
    <ligand>
        <name>GDP-alpha-D-mannose</name>
        <dbReference type="ChEBI" id="CHEBI:57527"/>
        <note>ligand shared between dimeric partners</note>
    </ligand>
</feature>
<feature type="binding site" evidence="1">
    <location>
        <position position="151"/>
    </location>
    <ligand>
        <name>Mg(2+)</name>
        <dbReference type="ChEBI" id="CHEBI:18420"/>
        <label>2</label>
    </ligand>
</feature>
<feature type="binding site" description="in other chain" evidence="1">
    <location>
        <position position="176"/>
    </location>
    <ligand>
        <name>GDP-alpha-D-mannose</name>
        <dbReference type="ChEBI" id="CHEBI:57527"/>
        <note>ligand shared between dimeric partners</note>
    </ligand>
</feature>
<proteinExistence type="inferred from homology"/>